<keyword id="KW-0028">Amino-acid biosynthesis</keyword>
<keyword id="KW-0057">Aromatic amino acid biosynthesis</keyword>
<keyword id="KW-0067">ATP-binding</keyword>
<keyword id="KW-0963">Cytoplasm</keyword>
<keyword id="KW-0418">Kinase</keyword>
<keyword id="KW-0460">Magnesium</keyword>
<keyword id="KW-0479">Metal-binding</keyword>
<keyword id="KW-0547">Nucleotide-binding</keyword>
<keyword id="KW-0808">Transferase</keyword>
<reference key="1">
    <citation type="journal article" date="2004" name="Nat. Genet.">
        <title>Comparison of genome degradation in Paratyphi A and Typhi, human-restricted serovars of Salmonella enterica that cause typhoid.</title>
        <authorList>
            <person name="McClelland M."/>
            <person name="Sanderson K.E."/>
            <person name="Clifton S.W."/>
            <person name="Latreille P."/>
            <person name="Porwollik S."/>
            <person name="Sabo A."/>
            <person name="Meyer R."/>
            <person name="Bieri T."/>
            <person name="Ozersky P."/>
            <person name="McLellan M."/>
            <person name="Harkins C.R."/>
            <person name="Wang C."/>
            <person name="Nguyen C."/>
            <person name="Berghoff A."/>
            <person name="Elliott G."/>
            <person name="Kohlberg S."/>
            <person name="Strong C."/>
            <person name="Du F."/>
            <person name="Carter J."/>
            <person name="Kremizki C."/>
            <person name="Layman D."/>
            <person name="Leonard S."/>
            <person name="Sun H."/>
            <person name="Fulton L."/>
            <person name="Nash W."/>
            <person name="Miner T."/>
            <person name="Minx P."/>
            <person name="Delehaunty K."/>
            <person name="Fronick C."/>
            <person name="Magrini V."/>
            <person name="Nhan M."/>
            <person name="Warren W."/>
            <person name="Florea L."/>
            <person name="Spieth J."/>
            <person name="Wilson R.K."/>
        </authorList>
    </citation>
    <scope>NUCLEOTIDE SEQUENCE [LARGE SCALE GENOMIC DNA]</scope>
    <source>
        <strain>ATCC 9150 / SARB42</strain>
    </source>
</reference>
<dbReference type="EC" id="2.7.1.71" evidence="1"/>
<dbReference type="EMBL" id="CP000026">
    <property type="protein sequence ID" value="AAV79166.1"/>
    <property type="molecule type" value="Genomic_DNA"/>
</dbReference>
<dbReference type="RefSeq" id="WP_000818621.1">
    <property type="nucleotide sequence ID" value="NC_006511.1"/>
</dbReference>
<dbReference type="SMR" id="Q5PLX1"/>
<dbReference type="GeneID" id="66757820"/>
<dbReference type="KEGG" id="spt:SPA3352"/>
<dbReference type="HOGENOM" id="CLU_057607_2_2_6"/>
<dbReference type="UniPathway" id="UPA00053">
    <property type="reaction ID" value="UER00088"/>
</dbReference>
<dbReference type="Proteomes" id="UP000008185">
    <property type="component" value="Chromosome"/>
</dbReference>
<dbReference type="GO" id="GO:0005829">
    <property type="term" value="C:cytosol"/>
    <property type="evidence" value="ECO:0007669"/>
    <property type="project" value="TreeGrafter"/>
</dbReference>
<dbReference type="GO" id="GO:0005524">
    <property type="term" value="F:ATP binding"/>
    <property type="evidence" value="ECO:0007669"/>
    <property type="project" value="UniProtKB-UniRule"/>
</dbReference>
<dbReference type="GO" id="GO:0000287">
    <property type="term" value="F:magnesium ion binding"/>
    <property type="evidence" value="ECO:0007669"/>
    <property type="project" value="UniProtKB-UniRule"/>
</dbReference>
<dbReference type="GO" id="GO:0004765">
    <property type="term" value="F:shikimate kinase activity"/>
    <property type="evidence" value="ECO:0007669"/>
    <property type="project" value="UniProtKB-UniRule"/>
</dbReference>
<dbReference type="GO" id="GO:0008652">
    <property type="term" value="P:amino acid biosynthetic process"/>
    <property type="evidence" value="ECO:0007669"/>
    <property type="project" value="UniProtKB-KW"/>
</dbReference>
<dbReference type="GO" id="GO:0009073">
    <property type="term" value="P:aromatic amino acid family biosynthetic process"/>
    <property type="evidence" value="ECO:0007669"/>
    <property type="project" value="UniProtKB-KW"/>
</dbReference>
<dbReference type="GO" id="GO:0009423">
    <property type="term" value="P:chorismate biosynthetic process"/>
    <property type="evidence" value="ECO:0007669"/>
    <property type="project" value="UniProtKB-UniRule"/>
</dbReference>
<dbReference type="CDD" id="cd00464">
    <property type="entry name" value="SK"/>
    <property type="match status" value="1"/>
</dbReference>
<dbReference type="FunFam" id="3.40.50.300:FF:000099">
    <property type="entry name" value="Shikimate kinase 1"/>
    <property type="match status" value="1"/>
</dbReference>
<dbReference type="Gene3D" id="3.40.50.300">
    <property type="entry name" value="P-loop containing nucleotide triphosphate hydrolases"/>
    <property type="match status" value="1"/>
</dbReference>
<dbReference type="HAMAP" id="MF_00109">
    <property type="entry name" value="Shikimate_kinase"/>
    <property type="match status" value="1"/>
</dbReference>
<dbReference type="InterPro" id="IPR027417">
    <property type="entry name" value="P-loop_NTPase"/>
</dbReference>
<dbReference type="InterPro" id="IPR031322">
    <property type="entry name" value="Shikimate/glucono_kinase"/>
</dbReference>
<dbReference type="InterPro" id="IPR000623">
    <property type="entry name" value="Shikimate_kinase/TSH1"/>
</dbReference>
<dbReference type="InterPro" id="IPR023000">
    <property type="entry name" value="Shikimate_kinase_CS"/>
</dbReference>
<dbReference type="NCBIfam" id="NF003456">
    <property type="entry name" value="PRK05057.1"/>
    <property type="match status" value="1"/>
</dbReference>
<dbReference type="PANTHER" id="PTHR21087">
    <property type="entry name" value="SHIKIMATE KINASE"/>
    <property type="match status" value="1"/>
</dbReference>
<dbReference type="PANTHER" id="PTHR21087:SF16">
    <property type="entry name" value="SHIKIMATE KINASE 1, CHLOROPLASTIC"/>
    <property type="match status" value="1"/>
</dbReference>
<dbReference type="Pfam" id="PF01202">
    <property type="entry name" value="SKI"/>
    <property type="match status" value="1"/>
</dbReference>
<dbReference type="PRINTS" id="PR01100">
    <property type="entry name" value="SHIKIMTKNASE"/>
</dbReference>
<dbReference type="SUPFAM" id="SSF52540">
    <property type="entry name" value="P-loop containing nucleoside triphosphate hydrolases"/>
    <property type="match status" value="1"/>
</dbReference>
<dbReference type="PROSITE" id="PS01128">
    <property type="entry name" value="SHIKIMATE_KINASE"/>
    <property type="match status" value="1"/>
</dbReference>
<proteinExistence type="inferred from homology"/>
<evidence type="ECO:0000255" key="1">
    <source>
        <dbReference type="HAMAP-Rule" id="MF_00109"/>
    </source>
</evidence>
<protein>
    <recommendedName>
        <fullName evidence="1">Shikimate kinase 1</fullName>
        <shortName evidence="1">SK 1</shortName>
        <ecNumber evidence="1">2.7.1.71</ecNumber>
    </recommendedName>
</protein>
<gene>
    <name evidence="1" type="primary">aroK</name>
    <name type="ordered locus">SPA3352</name>
</gene>
<accession>Q5PLX1</accession>
<organism>
    <name type="scientific">Salmonella paratyphi A (strain ATCC 9150 / SARB42)</name>
    <dbReference type="NCBI Taxonomy" id="295319"/>
    <lineage>
        <taxon>Bacteria</taxon>
        <taxon>Pseudomonadati</taxon>
        <taxon>Pseudomonadota</taxon>
        <taxon>Gammaproteobacteria</taxon>
        <taxon>Enterobacterales</taxon>
        <taxon>Enterobacteriaceae</taxon>
        <taxon>Salmonella</taxon>
    </lineage>
</organism>
<sequence length="173" mass="19470">MAEKRNIFLVGPMGAGKSTIGRQLAQQLNMEFYDSDQEIEKRTGADVGWVFDVEGEDGFRNREEKVINELTEKQGIVLATGGGSVKSRETRNRLSARGVVVYLETTIEKQLARTQRDKKRPLLQVEAPPREVLEALANERNPLYEEIADVTIRTDDQSAKVVANQIIHMLESN</sequence>
<name>AROK_SALPA</name>
<comment type="function">
    <text evidence="1">Catalyzes the specific phosphorylation of the 3-hydroxyl group of shikimic acid using ATP as a cosubstrate.</text>
</comment>
<comment type="catalytic activity">
    <reaction evidence="1">
        <text>shikimate + ATP = 3-phosphoshikimate + ADP + H(+)</text>
        <dbReference type="Rhea" id="RHEA:13121"/>
        <dbReference type="ChEBI" id="CHEBI:15378"/>
        <dbReference type="ChEBI" id="CHEBI:30616"/>
        <dbReference type="ChEBI" id="CHEBI:36208"/>
        <dbReference type="ChEBI" id="CHEBI:145989"/>
        <dbReference type="ChEBI" id="CHEBI:456216"/>
        <dbReference type="EC" id="2.7.1.71"/>
    </reaction>
</comment>
<comment type="cofactor">
    <cofactor evidence="1">
        <name>Mg(2+)</name>
        <dbReference type="ChEBI" id="CHEBI:18420"/>
    </cofactor>
    <text evidence="1">Binds 1 Mg(2+) ion per subunit.</text>
</comment>
<comment type="pathway">
    <text evidence="1">Metabolic intermediate biosynthesis; chorismate biosynthesis; chorismate from D-erythrose 4-phosphate and phosphoenolpyruvate: step 5/7.</text>
</comment>
<comment type="subunit">
    <text evidence="1">Monomer.</text>
</comment>
<comment type="subcellular location">
    <subcellularLocation>
        <location evidence="1">Cytoplasm</location>
    </subcellularLocation>
</comment>
<comment type="similarity">
    <text evidence="1">Belongs to the shikimate kinase family.</text>
</comment>
<feature type="chain" id="PRO_0000237927" description="Shikimate kinase 1">
    <location>
        <begin position="1"/>
        <end position="173"/>
    </location>
</feature>
<feature type="binding site" evidence="1">
    <location>
        <begin position="14"/>
        <end position="19"/>
    </location>
    <ligand>
        <name>ATP</name>
        <dbReference type="ChEBI" id="CHEBI:30616"/>
    </ligand>
</feature>
<feature type="binding site" evidence="1">
    <location>
        <position position="18"/>
    </location>
    <ligand>
        <name>Mg(2+)</name>
        <dbReference type="ChEBI" id="CHEBI:18420"/>
    </ligand>
</feature>
<feature type="binding site" evidence="1">
    <location>
        <position position="36"/>
    </location>
    <ligand>
        <name>substrate</name>
    </ligand>
</feature>
<feature type="binding site" evidence="1">
    <location>
        <position position="60"/>
    </location>
    <ligand>
        <name>substrate</name>
    </ligand>
</feature>
<feature type="binding site" evidence="1">
    <location>
        <position position="82"/>
    </location>
    <ligand>
        <name>substrate</name>
    </ligand>
</feature>
<feature type="binding site" evidence="1">
    <location>
        <position position="120"/>
    </location>
    <ligand>
        <name>ATP</name>
        <dbReference type="ChEBI" id="CHEBI:30616"/>
    </ligand>
</feature>
<feature type="binding site" evidence="1">
    <location>
        <position position="140"/>
    </location>
    <ligand>
        <name>substrate</name>
    </ligand>
</feature>
<feature type="binding site" evidence="1">
    <location>
        <position position="157"/>
    </location>
    <ligand>
        <name>ATP</name>
        <dbReference type="ChEBI" id="CHEBI:30616"/>
    </ligand>
</feature>